<feature type="chain" id="PRO_0000334414" description="Na(+)/H(+) antiporter NhaA">
    <location>
        <begin position="1"/>
        <end position="388"/>
    </location>
</feature>
<feature type="transmembrane region" description="Helical" evidence="1">
    <location>
        <begin position="14"/>
        <end position="34"/>
    </location>
</feature>
<feature type="transmembrane region" description="Helical" evidence="1">
    <location>
        <begin position="59"/>
        <end position="79"/>
    </location>
</feature>
<feature type="transmembrane region" description="Helical" evidence="1">
    <location>
        <begin position="95"/>
        <end position="115"/>
    </location>
</feature>
<feature type="transmembrane region" description="Helical" evidence="1">
    <location>
        <begin position="125"/>
        <end position="145"/>
    </location>
</feature>
<feature type="transmembrane region" description="Helical" evidence="1">
    <location>
        <begin position="154"/>
        <end position="174"/>
    </location>
</feature>
<feature type="transmembrane region" description="Helical" evidence="1">
    <location>
        <begin position="179"/>
        <end position="199"/>
    </location>
</feature>
<feature type="transmembrane region" description="Helical" evidence="1">
    <location>
        <begin position="219"/>
        <end position="239"/>
    </location>
</feature>
<feature type="transmembrane region" description="Helical" evidence="1">
    <location>
        <begin position="254"/>
        <end position="274"/>
    </location>
</feature>
<feature type="transmembrane region" description="Helical" evidence="1">
    <location>
        <begin position="292"/>
        <end position="312"/>
    </location>
</feature>
<feature type="transmembrane region" description="Helical" evidence="1">
    <location>
        <begin position="328"/>
        <end position="348"/>
    </location>
</feature>
<feature type="transmembrane region" description="Helical" evidence="1">
    <location>
        <begin position="360"/>
        <end position="380"/>
    </location>
</feature>
<sequence length="388" mass="41397">MKHLHRFFSSDASGGIILIIAAALAMLMANMGATSGWYHDFLETPVQLRVGALEINKNMLLWINDALMAVFFLLIGLEVKRELMQGSLASLRQAAFPVIAAIGGMIVPALLYLAFNYSDPVTREGWAIPAATDIAFALGVLALLGSRVPLALKIFLMALAIIDDLGAIIIIALFYTSDLSIVSLGVAAFAIAVLALLNLCGVRRTGVYILVGAVLWTAVLKSGVHATLAGVIVGFFIPLKEKHGRSPAKRLEHVLHPWVAYLILPLFAFANAGVSLQGVTMDGLTSMLPLGIIAGLLIGKPLGISLFCWLALRFKLAHLPQGTTYQQIMAVGILCGIGFTMSIFIASLAFGNIDPELINWAKLGILIGSLLSAVVGYSWLRARLNAPA</sequence>
<gene>
    <name evidence="1" type="primary">nhaA</name>
    <name type="ordered locus">SPA0040</name>
</gene>
<keyword id="KW-0050">Antiport</keyword>
<keyword id="KW-0997">Cell inner membrane</keyword>
<keyword id="KW-1003">Cell membrane</keyword>
<keyword id="KW-0406">Ion transport</keyword>
<keyword id="KW-0472">Membrane</keyword>
<keyword id="KW-0915">Sodium</keyword>
<keyword id="KW-0739">Sodium transport</keyword>
<keyword id="KW-0812">Transmembrane</keyword>
<keyword id="KW-1133">Transmembrane helix</keyword>
<keyword id="KW-0813">Transport</keyword>
<dbReference type="EMBL" id="CP000026">
    <property type="protein sequence ID" value="AAV76075.1"/>
    <property type="molecule type" value="Genomic_DNA"/>
</dbReference>
<dbReference type="RefSeq" id="WP_000681337.1">
    <property type="nucleotide sequence ID" value="NC_006511.1"/>
</dbReference>
<dbReference type="SMR" id="Q5PDL4"/>
<dbReference type="KEGG" id="spt:SPA0040"/>
<dbReference type="HOGENOM" id="CLU_015803_1_0_6"/>
<dbReference type="Proteomes" id="UP000008185">
    <property type="component" value="Chromosome"/>
</dbReference>
<dbReference type="GO" id="GO:0005886">
    <property type="term" value="C:plasma membrane"/>
    <property type="evidence" value="ECO:0007669"/>
    <property type="project" value="UniProtKB-SubCell"/>
</dbReference>
<dbReference type="GO" id="GO:0015385">
    <property type="term" value="F:sodium:proton antiporter activity"/>
    <property type="evidence" value="ECO:0007669"/>
    <property type="project" value="TreeGrafter"/>
</dbReference>
<dbReference type="GO" id="GO:0006885">
    <property type="term" value="P:regulation of pH"/>
    <property type="evidence" value="ECO:0007669"/>
    <property type="project" value="InterPro"/>
</dbReference>
<dbReference type="FunFam" id="1.20.1530.10:FF:000001">
    <property type="entry name" value="Na(+)/H(+) antiporter NhaA"/>
    <property type="match status" value="1"/>
</dbReference>
<dbReference type="Gene3D" id="1.20.1530.10">
    <property type="entry name" value="Na+/H+ antiporter like domain"/>
    <property type="match status" value="1"/>
</dbReference>
<dbReference type="HAMAP" id="MF_01844">
    <property type="entry name" value="NhaA"/>
    <property type="match status" value="1"/>
</dbReference>
<dbReference type="InterPro" id="IPR023171">
    <property type="entry name" value="Na/H_antiporter_dom_sf"/>
</dbReference>
<dbReference type="InterPro" id="IPR004670">
    <property type="entry name" value="NhaA"/>
</dbReference>
<dbReference type="NCBIfam" id="TIGR00773">
    <property type="entry name" value="NhaA"/>
    <property type="match status" value="1"/>
</dbReference>
<dbReference type="NCBIfam" id="NF007111">
    <property type="entry name" value="PRK09560.1"/>
    <property type="match status" value="1"/>
</dbReference>
<dbReference type="NCBIfam" id="NF007112">
    <property type="entry name" value="PRK09561.1"/>
    <property type="match status" value="1"/>
</dbReference>
<dbReference type="PANTHER" id="PTHR30341:SF0">
    <property type="entry name" value="NA(+)_H(+) ANTIPORTER NHAA"/>
    <property type="match status" value="1"/>
</dbReference>
<dbReference type="PANTHER" id="PTHR30341">
    <property type="entry name" value="SODIUM ION/PROTON ANTIPORTER NHAA-RELATED"/>
    <property type="match status" value="1"/>
</dbReference>
<dbReference type="Pfam" id="PF06965">
    <property type="entry name" value="Na_H_antiport_1"/>
    <property type="match status" value="1"/>
</dbReference>
<proteinExistence type="inferred from homology"/>
<reference key="1">
    <citation type="journal article" date="2004" name="Nat. Genet.">
        <title>Comparison of genome degradation in Paratyphi A and Typhi, human-restricted serovars of Salmonella enterica that cause typhoid.</title>
        <authorList>
            <person name="McClelland M."/>
            <person name="Sanderson K.E."/>
            <person name="Clifton S.W."/>
            <person name="Latreille P."/>
            <person name="Porwollik S."/>
            <person name="Sabo A."/>
            <person name="Meyer R."/>
            <person name="Bieri T."/>
            <person name="Ozersky P."/>
            <person name="McLellan M."/>
            <person name="Harkins C.R."/>
            <person name="Wang C."/>
            <person name="Nguyen C."/>
            <person name="Berghoff A."/>
            <person name="Elliott G."/>
            <person name="Kohlberg S."/>
            <person name="Strong C."/>
            <person name="Du F."/>
            <person name="Carter J."/>
            <person name="Kremizki C."/>
            <person name="Layman D."/>
            <person name="Leonard S."/>
            <person name="Sun H."/>
            <person name="Fulton L."/>
            <person name="Nash W."/>
            <person name="Miner T."/>
            <person name="Minx P."/>
            <person name="Delehaunty K."/>
            <person name="Fronick C."/>
            <person name="Magrini V."/>
            <person name="Nhan M."/>
            <person name="Warren W."/>
            <person name="Florea L."/>
            <person name="Spieth J."/>
            <person name="Wilson R.K."/>
        </authorList>
    </citation>
    <scope>NUCLEOTIDE SEQUENCE [LARGE SCALE GENOMIC DNA]</scope>
    <source>
        <strain>ATCC 9150 / SARB42</strain>
    </source>
</reference>
<comment type="function">
    <text evidence="1">Na(+)/H(+) antiporter that extrudes sodium in exchange for external protons.</text>
</comment>
<comment type="catalytic activity">
    <reaction evidence="1">
        <text>Na(+)(in) + 2 H(+)(out) = Na(+)(out) + 2 H(+)(in)</text>
        <dbReference type="Rhea" id="RHEA:29251"/>
        <dbReference type="ChEBI" id="CHEBI:15378"/>
        <dbReference type="ChEBI" id="CHEBI:29101"/>
    </reaction>
    <physiologicalReaction direction="left-to-right" evidence="1">
        <dbReference type="Rhea" id="RHEA:29252"/>
    </physiologicalReaction>
</comment>
<comment type="subcellular location">
    <subcellularLocation>
        <location evidence="1">Cell inner membrane</location>
        <topology evidence="1">Multi-pass membrane protein</topology>
    </subcellularLocation>
</comment>
<comment type="similarity">
    <text evidence="1">Belongs to the NhaA Na(+)/H(+) (TC 2.A.33) antiporter family.</text>
</comment>
<evidence type="ECO:0000255" key="1">
    <source>
        <dbReference type="HAMAP-Rule" id="MF_01844"/>
    </source>
</evidence>
<protein>
    <recommendedName>
        <fullName evidence="1">Na(+)/H(+) antiporter NhaA</fullName>
    </recommendedName>
    <alternativeName>
        <fullName evidence="1">Sodium/proton antiporter NhaA</fullName>
    </alternativeName>
</protein>
<accession>Q5PDL4</accession>
<name>NHAA_SALPA</name>
<organism>
    <name type="scientific">Salmonella paratyphi A (strain ATCC 9150 / SARB42)</name>
    <dbReference type="NCBI Taxonomy" id="295319"/>
    <lineage>
        <taxon>Bacteria</taxon>
        <taxon>Pseudomonadati</taxon>
        <taxon>Pseudomonadota</taxon>
        <taxon>Gammaproteobacteria</taxon>
        <taxon>Enterobacterales</taxon>
        <taxon>Enterobacteriaceae</taxon>
        <taxon>Salmonella</taxon>
    </lineage>
</organism>